<accession>Q6TM71</accession>
<proteinExistence type="predicted"/>
<organismHost>
    <name type="scientific">Pseudomonas aeruginosa</name>
    <dbReference type="NCBI Taxonomy" id="287"/>
</organismHost>
<gene>
    <name evidence="5" type="primary">orf31</name>
</gene>
<reference key="1">
    <citation type="journal article" date="2004" name="J. Bacteriol.">
        <title>Complete sequence and evolutionary genomic analysis of the Pseudomonas aeruginosa transposable bacteriophage D3112.</title>
        <authorList>
            <person name="Wang P.W."/>
            <person name="Chu L."/>
            <person name="Guttman D.S."/>
        </authorList>
    </citation>
    <scope>NUCLEOTIDE SEQUENCE [GENOMIC DNA]</scope>
</reference>
<reference key="2">
    <citation type="journal article" date="2014" name="MBio">
        <title>A new group of phage anti-CRISPR genes inhibits the type I-E CRISPR-Cas system of Pseudomonas aeruginosa.</title>
        <authorList>
            <person name="Pawluk A."/>
            <person name="Bondy-Denomy J."/>
            <person name="Cheung V.H."/>
            <person name="Maxwell K.L."/>
            <person name="Davidson A.R."/>
        </authorList>
    </citation>
    <scope>FUNCTION</scope>
</reference>
<reference key="3">
    <citation type="journal article" date="2015" name="Nature">
        <title>Multiple mechanisms for CRISPR-Cas inhibition by anti-CRISPR proteins.</title>
        <authorList>
            <person name="Bondy-Denomy J."/>
            <person name="Garcia B."/>
            <person name="Strum S."/>
            <person name="Du M."/>
            <person name="Rollins M.F."/>
            <person name="Hidalgo-Reyes Y."/>
            <person name="Wiedenheft B."/>
            <person name="Maxwell K.L."/>
            <person name="Davidson A.R."/>
        </authorList>
    </citation>
    <scope>FUNCTION</scope>
</reference>
<name>ACR31_BPD31</name>
<keyword id="KW-1257">CRISPR-cas system evasion by virus</keyword>
<keyword id="KW-0945">Host-virus interaction</keyword>
<keyword id="KW-1080">Inhibition of host adaptive immune response by virus</keyword>
<keyword id="KW-1185">Reference proteome</keyword>
<keyword id="KW-0899">Viral immunoevasion</keyword>
<comment type="function">
    <text evidence="1 2">Allows the phage to evade the CRISPR/Cas system type I-E (PubMed:24736222, PubMed:26416740). Prevents the DNA-binding activity of the CRISPR-Cas complex.</text>
</comment>
<feature type="chain" id="PRO_0000436041" description="Anti-CRISPR protein 31">
    <location>
        <begin position="1"/>
        <end position="52"/>
    </location>
</feature>
<dbReference type="EMBL" id="AY394005">
    <property type="protein sequence ID" value="AAQ94469.1"/>
    <property type="molecule type" value="Genomic_DNA"/>
</dbReference>
<dbReference type="RefSeq" id="NP_938238.1">
    <property type="nucleotide sequence ID" value="NC_005178.1"/>
</dbReference>
<dbReference type="SMR" id="Q6TM71"/>
<dbReference type="GeneID" id="2648178"/>
<dbReference type="KEGG" id="vg:2648178"/>
<dbReference type="Proteomes" id="UP000000875">
    <property type="component" value="Genome"/>
</dbReference>
<dbReference type="GO" id="GO:0039504">
    <property type="term" value="P:symbiont-mediated suppression of host adaptive immune response"/>
    <property type="evidence" value="ECO:0007669"/>
    <property type="project" value="UniProtKB-KW"/>
</dbReference>
<dbReference type="GO" id="GO:0098672">
    <property type="term" value="P:symbiont-mediated suppression of host CRISPR-cas system"/>
    <property type="evidence" value="ECO:0007669"/>
    <property type="project" value="UniProtKB-KW"/>
</dbReference>
<dbReference type="CDD" id="cd22552">
    <property type="entry name" value="AcrIE4"/>
    <property type="match status" value="1"/>
</dbReference>
<protein>
    <recommendedName>
        <fullName evidence="3">Anti-CRISPR protein 31</fullName>
        <shortName>ACR3112-31</shortName>
    </recommendedName>
    <alternativeName>
        <fullName evidence="4">Gene product 31</fullName>
        <shortName>gp31</shortName>
    </alternativeName>
</protein>
<sequence length="52" mass="6047">MSTQYTYEQIAEDFRLWGEYMDPNAEMTEEEFQALSTEEKVAMQVEAFGAEA</sequence>
<organism>
    <name type="scientific">Pseudomonas phage D3112</name>
    <name type="common">Bacteriophage D3112</name>
    <dbReference type="NCBI Taxonomy" id="2907964"/>
    <lineage>
        <taxon>Viruses</taxon>
        <taxon>Duplodnaviria</taxon>
        <taxon>Heunggongvirae</taxon>
        <taxon>Uroviricota</taxon>
        <taxon>Caudoviricetes</taxon>
        <taxon>Casadabanvirus</taxon>
        <taxon>Casadabanvirus D3112</taxon>
    </lineage>
</organism>
<evidence type="ECO:0000269" key="1">
    <source>
    </source>
</evidence>
<evidence type="ECO:0000269" key="2">
    <source>
    </source>
</evidence>
<evidence type="ECO:0000303" key="3">
    <source>
    </source>
</evidence>
<evidence type="ECO:0000305" key="4"/>
<evidence type="ECO:0000312" key="5">
    <source>
        <dbReference type="EMBL" id="AAQ94469.1"/>
    </source>
</evidence>